<dbReference type="EMBL" id="CP000562">
    <property type="protein sequence ID" value="ABN57877.1"/>
    <property type="molecule type" value="Genomic_DNA"/>
</dbReference>
<dbReference type="RefSeq" id="WP_011844786.1">
    <property type="nucleotide sequence ID" value="NC_009051.1"/>
</dbReference>
<dbReference type="SMR" id="A3CWX7"/>
<dbReference type="STRING" id="368407.Memar_1951"/>
<dbReference type="GeneID" id="4846347"/>
<dbReference type="KEGG" id="mem:Memar_1951"/>
<dbReference type="eggNOG" id="arCOG01166">
    <property type="taxonomic scope" value="Archaea"/>
</dbReference>
<dbReference type="HOGENOM" id="CLU_004131_4_1_2"/>
<dbReference type="OrthoDB" id="146201at2157"/>
<dbReference type="Proteomes" id="UP000002146">
    <property type="component" value="Chromosome"/>
</dbReference>
<dbReference type="GO" id="GO:0032300">
    <property type="term" value="C:mismatch repair complex"/>
    <property type="evidence" value="ECO:0007669"/>
    <property type="project" value="InterPro"/>
</dbReference>
<dbReference type="GO" id="GO:0005524">
    <property type="term" value="F:ATP binding"/>
    <property type="evidence" value="ECO:0007669"/>
    <property type="project" value="InterPro"/>
</dbReference>
<dbReference type="GO" id="GO:0016887">
    <property type="term" value="F:ATP hydrolysis activity"/>
    <property type="evidence" value="ECO:0007669"/>
    <property type="project" value="InterPro"/>
</dbReference>
<dbReference type="GO" id="GO:0140664">
    <property type="term" value="F:ATP-dependent DNA damage sensor activity"/>
    <property type="evidence" value="ECO:0007669"/>
    <property type="project" value="InterPro"/>
</dbReference>
<dbReference type="GO" id="GO:0030983">
    <property type="term" value="F:mismatched DNA binding"/>
    <property type="evidence" value="ECO:0007669"/>
    <property type="project" value="InterPro"/>
</dbReference>
<dbReference type="GO" id="GO:0006298">
    <property type="term" value="P:mismatch repair"/>
    <property type="evidence" value="ECO:0007669"/>
    <property type="project" value="UniProtKB-UniRule"/>
</dbReference>
<dbReference type="CDD" id="cd16926">
    <property type="entry name" value="HATPase_MutL-MLH-PMS-like"/>
    <property type="match status" value="1"/>
</dbReference>
<dbReference type="CDD" id="cd00782">
    <property type="entry name" value="MutL_Trans"/>
    <property type="match status" value="1"/>
</dbReference>
<dbReference type="FunFam" id="3.30.565.10:FF:000003">
    <property type="entry name" value="DNA mismatch repair endonuclease MutL"/>
    <property type="match status" value="1"/>
</dbReference>
<dbReference type="Gene3D" id="3.30.230.10">
    <property type="match status" value="1"/>
</dbReference>
<dbReference type="Gene3D" id="3.30.565.10">
    <property type="entry name" value="Histidine kinase-like ATPase, C-terminal domain"/>
    <property type="match status" value="1"/>
</dbReference>
<dbReference type="Gene3D" id="3.30.1540.20">
    <property type="entry name" value="MutL, C-terminal domain, dimerisation subdomain"/>
    <property type="match status" value="1"/>
</dbReference>
<dbReference type="Gene3D" id="3.30.1370.100">
    <property type="entry name" value="MutL, C-terminal domain, regulatory subdomain"/>
    <property type="match status" value="1"/>
</dbReference>
<dbReference type="HAMAP" id="MF_00149">
    <property type="entry name" value="DNA_mis_repair"/>
    <property type="match status" value="1"/>
</dbReference>
<dbReference type="InterPro" id="IPR014762">
    <property type="entry name" value="DNA_mismatch_repair_CS"/>
</dbReference>
<dbReference type="InterPro" id="IPR020667">
    <property type="entry name" value="DNA_mismatch_repair_MutL"/>
</dbReference>
<dbReference type="InterPro" id="IPR013507">
    <property type="entry name" value="DNA_mismatch_S5_2-like"/>
</dbReference>
<dbReference type="InterPro" id="IPR036890">
    <property type="entry name" value="HATPase_C_sf"/>
</dbReference>
<dbReference type="InterPro" id="IPR002099">
    <property type="entry name" value="MutL/Mlh/PMS"/>
</dbReference>
<dbReference type="InterPro" id="IPR038973">
    <property type="entry name" value="MutL/Mlh/Pms-like"/>
</dbReference>
<dbReference type="InterPro" id="IPR014790">
    <property type="entry name" value="MutL_C"/>
</dbReference>
<dbReference type="InterPro" id="IPR042120">
    <property type="entry name" value="MutL_C_dimsub"/>
</dbReference>
<dbReference type="InterPro" id="IPR042121">
    <property type="entry name" value="MutL_C_regsub"/>
</dbReference>
<dbReference type="InterPro" id="IPR037198">
    <property type="entry name" value="MutL_C_sf"/>
</dbReference>
<dbReference type="InterPro" id="IPR020568">
    <property type="entry name" value="Ribosomal_Su5_D2-typ_SF"/>
</dbReference>
<dbReference type="InterPro" id="IPR014721">
    <property type="entry name" value="Ribsml_uS5_D2-typ_fold_subgr"/>
</dbReference>
<dbReference type="NCBIfam" id="TIGR00585">
    <property type="entry name" value="mutl"/>
    <property type="match status" value="1"/>
</dbReference>
<dbReference type="PANTHER" id="PTHR10073">
    <property type="entry name" value="DNA MISMATCH REPAIR PROTEIN MLH, PMS, MUTL"/>
    <property type="match status" value="1"/>
</dbReference>
<dbReference type="PANTHER" id="PTHR10073:SF12">
    <property type="entry name" value="DNA MISMATCH REPAIR PROTEIN MLH1"/>
    <property type="match status" value="1"/>
</dbReference>
<dbReference type="Pfam" id="PF01119">
    <property type="entry name" value="DNA_mis_repair"/>
    <property type="match status" value="1"/>
</dbReference>
<dbReference type="Pfam" id="PF13589">
    <property type="entry name" value="HATPase_c_3"/>
    <property type="match status" value="1"/>
</dbReference>
<dbReference type="Pfam" id="PF08676">
    <property type="entry name" value="MutL_C"/>
    <property type="match status" value="1"/>
</dbReference>
<dbReference type="SMART" id="SM01340">
    <property type="entry name" value="DNA_mis_repair"/>
    <property type="match status" value="1"/>
</dbReference>
<dbReference type="SMART" id="SM00853">
    <property type="entry name" value="MutL_C"/>
    <property type="match status" value="1"/>
</dbReference>
<dbReference type="SUPFAM" id="SSF55874">
    <property type="entry name" value="ATPase domain of HSP90 chaperone/DNA topoisomerase II/histidine kinase"/>
    <property type="match status" value="1"/>
</dbReference>
<dbReference type="SUPFAM" id="SSF118116">
    <property type="entry name" value="DNA mismatch repair protein MutL"/>
    <property type="match status" value="1"/>
</dbReference>
<dbReference type="SUPFAM" id="SSF54211">
    <property type="entry name" value="Ribosomal protein S5 domain 2-like"/>
    <property type="match status" value="1"/>
</dbReference>
<dbReference type="PROSITE" id="PS00058">
    <property type="entry name" value="DNA_MISMATCH_REPAIR_1"/>
    <property type="match status" value="1"/>
</dbReference>
<name>MUTL_METMJ</name>
<keyword id="KW-0227">DNA damage</keyword>
<keyword id="KW-0234">DNA repair</keyword>
<gene>
    <name evidence="1" type="primary">mutL</name>
    <name type="ordered locus">Memar_1951</name>
</gene>
<protein>
    <recommendedName>
        <fullName evidence="1">DNA mismatch repair protein MutL</fullName>
    </recommendedName>
</protein>
<comment type="function">
    <text evidence="1">This protein is involved in the repair of mismatches in DNA. It is required for dam-dependent methyl-directed DNA mismatch repair. May act as a 'molecular matchmaker', a protein that promotes the formation of a stable complex between two or more DNA-binding proteins in an ATP-dependent manner without itself being part of a final effector complex.</text>
</comment>
<comment type="similarity">
    <text evidence="1">Belongs to the DNA mismatch repair MutL/HexB family.</text>
</comment>
<evidence type="ECO:0000255" key="1">
    <source>
        <dbReference type="HAMAP-Rule" id="MF_00149"/>
    </source>
</evidence>
<feature type="chain" id="PRO_1000010044" description="DNA mismatch repair protein MutL">
    <location>
        <begin position="1"/>
        <end position="585"/>
    </location>
</feature>
<organism>
    <name type="scientific">Methanoculleus marisnigri (strain ATCC 35101 / DSM 1498 / JR1)</name>
    <dbReference type="NCBI Taxonomy" id="368407"/>
    <lineage>
        <taxon>Archaea</taxon>
        <taxon>Methanobacteriati</taxon>
        <taxon>Methanobacteriota</taxon>
        <taxon>Stenosarchaea group</taxon>
        <taxon>Methanomicrobia</taxon>
        <taxon>Methanomicrobiales</taxon>
        <taxon>Methanomicrobiaceae</taxon>
        <taxon>Methanoculleus</taxon>
    </lineage>
</organism>
<reference key="1">
    <citation type="journal article" date="2009" name="Stand. Genomic Sci.">
        <title>Complete genome sequence of Methanoculleus marisnigri Romesser et al. 1981 type strain JR1.</title>
        <authorList>
            <person name="Anderson I.J."/>
            <person name="Sieprawska-Lupa M."/>
            <person name="Lapidus A."/>
            <person name="Nolan M."/>
            <person name="Copeland A."/>
            <person name="Glavina Del Rio T."/>
            <person name="Tice H."/>
            <person name="Dalin E."/>
            <person name="Barry K."/>
            <person name="Saunders E."/>
            <person name="Han C."/>
            <person name="Brettin T."/>
            <person name="Detter J.C."/>
            <person name="Bruce D."/>
            <person name="Mikhailova N."/>
            <person name="Pitluck S."/>
            <person name="Hauser L."/>
            <person name="Land M."/>
            <person name="Lucas S."/>
            <person name="Richardson P."/>
            <person name="Whitman W.B."/>
            <person name="Kyrpides N.C."/>
        </authorList>
    </citation>
    <scope>NUCLEOTIDE SEQUENCE [LARGE SCALE GENOMIC DNA]</scope>
    <source>
        <strain>ATCC 35101 / DSM 1498 / JR1</strain>
    </source>
</reference>
<sequence>MTKIRVLDPDTVNQIAAGEVVERPASVVKELLENAIDADSTSILIDVSSDMAAITKIRVTDNGEGMTPEEAVLAFHPHATSKIRDIADLSAVRTLGFRGEALASIAAVAEVTLVTRPRGGGALAGTRLVVRGGEIVEKSEVGAPEGTTIAVERLFYNTPARRKFLKSRNTELAHVYAVVESLALAHGEVAFRVVHNGKERMATQRSGGALNTIAGLYGADLARSLVPVEGRLPFLAIRGYISRPSESRGNPSQISVSINGRSIASRQIAAAVREGYGTLLPKDRYPVAFLDLAIDTGLVDVNVHPTKREIRLSREREITGAIAAAVDEALAGHDLARETPVEPVQQQIIAADPGQVPTPSPVGEPGAPYTAGHRGLTLSDKQLRRTETEGGENLLPAMEPIGQVAATYIVAEGADGTLYLVDQHAAHERVLYDQVTEQRDKAAGSQELITPVVLSLPPKESAALRDAIPLLADEGFVVDEFGRDTFAVRAVPAALGAVEDPGTVRETIADLLADESRTAPDRRERVTCIVACRGAVKAGALLTPDQQKRLIMQLARTKTPWTCPHGRPTVVAFDRRRLDGMFRRG</sequence>
<proteinExistence type="inferred from homology"/>
<accession>A3CWX7</accession>